<protein>
    <recommendedName>
        <fullName>Tetratricopeptide repeat protein 9C</fullName>
        <shortName>TPR repeat protein 9C</shortName>
    </recommendedName>
</protein>
<sequence length="171" mass="19919">MEKRLQEAQLYKEKGNQCYREGKYRDAVSGYHRALLQLRGLDPSLPSPIPNLGPQGPALTPEQENLLHTTQTDCYNNLAACLLQMEPVNYERVKEYSQKVLERQPDNAKALYRAGVAFFHLQDYDQARHYLMAAVNRKPKDANVRRYLQRTQLELSSYHRKEKQLYLGMFG</sequence>
<feature type="chain" id="PRO_0000294464" description="Tetratricopeptide repeat protein 9C">
    <location>
        <begin position="1"/>
        <end position="171"/>
    </location>
</feature>
<feature type="repeat" description="TPR 1">
    <location>
        <begin position="8"/>
        <end position="41"/>
    </location>
</feature>
<feature type="repeat" description="TPR 2">
    <location>
        <begin position="72"/>
        <end position="107"/>
    </location>
</feature>
<feature type="repeat" description="TPR 3">
    <location>
        <begin position="108"/>
        <end position="141"/>
    </location>
</feature>
<organism>
    <name type="scientific">Bos taurus</name>
    <name type="common">Bovine</name>
    <dbReference type="NCBI Taxonomy" id="9913"/>
    <lineage>
        <taxon>Eukaryota</taxon>
        <taxon>Metazoa</taxon>
        <taxon>Chordata</taxon>
        <taxon>Craniata</taxon>
        <taxon>Vertebrata</taxon>
        <taxon>Euteleostomi</taxon>
        <taxon>Mammalia</taxon>
        <taxon>Eutheria</taxon>
        <taxon>Laurasiatheria</taxon>
        <taxon>Artiodactyla</taxon>
        <taxon>Ruminantia</taxon>
        <taxon>Pecora</taxon>
        <taxon>Bovidae</taxon>
        <taxon>Bovinae</taxon>
        <taxon>Bos</taxon>
    </lineage>
</organism>
<dbReference type="EMBL" id="BC134555">
    <property type="protein sequence ID" value="AAI34556.1"/>
    <property type="molecule type" value="mRNA"/>
</dbReference>
<dbReference type="RefSeq" id="NP_001077261.1">
    <property type="nucleotide sequence ID" value="NM_001083792.1"/>
</dbReference>
<dbReference type="RefSeq" id="XP_010819326.1">
    <property type="nucleotide sequence ID" value="XM_010821024.4"/>
</dbReference>
<dbReference type="RefSeq" id="XP_010819327.1">
    <property type="nucleotide sequence ID" value="XM_010821025.2"/>
</dbReference>
<dbReference type="RefSeq" id="XP_010819329.1">
    <property type="nucleotide sequence ID" value="XM_010821027.2"/>
</dbReference>
<dbReference type="RefSeq" id="XP_010819330.1">
    <property type="nucleotide sequence ID" value="XM_010821028.4"/>
</dbReference>
<dbReference type="RefSeq" id="XP_024843132.1">
    <property type="nucleotide sequence ID" value="XM_024987364.2"/>
</dbReference>
<dbReference type="SMR" id="A4IFF3"/>
<dbReference type="FunCoup" id="A4IFF3">
    <property type="interactions" value="4029"/>
</dbReference>
<dbReference type="STRING" id="9913.ENSBTAP00000001024"/>
<dbReference type="PaxDb" id="9913-ENSBTAP00000001024"/>
<dbReference type="Ensembl" id="ENSBTAT00000001024.6">
    <property type="protein sequence ID" value="ENSBTAP00000001024.5"/>
    <property type="gene ID" value="ENSBTAG00000000773.7"/>
</dbReference>
<dbReference type="GeneID" id="786577"/>
<dbReference type="KEGG" id="bta:786577"/>
<dbReference type="CTD" id="283237"/>
<dbReference type="VEuPathDB" id="HostDB:ENSBTAG00000000773"/>
<dbReference type="eggNOG" id="ENOG502RXZG">
    <property type="taxonomic scope" value="Eukaryota"/>
</dbReference>
<dbReference type="GeneTree" id="ENSGT00940000161805"/>
<dbReference type="HOGENOM" id="CLU_100621_1_0_1"/>
<dbReference type="InParanoid" id="A4IFF3"/>
<dbReference type="OMA" id="KIYANMS"/>
<dbReference type="OrthoDB" id="433738at2759"/>
<dbReference type="TreeFam" id="TF331917"/>
<dbReference type="Proteomes" id="UP000009136">
    <property type="component" value="Chromosome 29"/>
</dbReference>
<dbReference type="Bgee" id="ENSBTAG00000000773">
    <property type="expression patterns" value="Expressed in oocyte and 108 other cell types or tissues"/>
</dbReference>
<dbReference type="Gene3D" id="1.25.40.10">
    <property type="entry name" value="Tetratricopeptide repeat domain"/>
    <property type="match status" value="1"/>
</dbReference>
<dbReference type="InterPro" id="IPR039663">
    <property type="entry name" value="AIP/AIPL1/TTC9"/>
</dbReference>
<dbReference type="InterPro" id="IPR011990">
    <property type="entry name" value="TPR-like_helical_dom_sf"/>
</dbReference>
<dbReference type="InterPro" id="IPR019734">
    <property type="entry name" value="TPR_rpt"/>
</dbReference>
<dbReference type="PANTHER" id="PTHR11242">
    <property type="entry name" value="ARYL HYDROCARBON RECEPTOR INTERACTING PROTEIN RELATED"/>
    <property type="match status" value="1"/>
</dbReference>
<dbReference type="PANTHER" id="PTHR11242:SF14">
    <property type="entry name" value="TETRATRICOPEPTIDE REPEAT PROTEIN 9C"/>
    <property type="match status" value="1"/>
</dbReference>
<dbReference type="Pfam" id="PF14559">
    <property type="entry name" value="TPR_19"/>
    <property type="match status" value="1"/>
</dbReference>
<dbReference type="SMART" id="SM00028">
    <property type="entry name" value="TPR"/>
    <property type="match status" value="3"/>
</dbReference>
<dbReference type="SUPFAM" id="SSF48452">
    <property type="entry name" value="TPR-like"/>
    <property type="match status" value="1"/>
</dbReference>
<dbReference type="PROSITE" id="PS50005">
    <property type="entry name" value="TPR"/>
    <property type="match status" value="2"/>
</dbReference>
<dbReference type="PROSITE" id="PS50293">
    <property type="entry name" value="TPR_REGION"/>
    <property type="match status" value="1"/>
</dbReference>
<proteinExistence type="evidence at transcript level"/>
<keyword id="KW-1185">Reference proteome</keyword>
<keyword id="KW-0677">Repeat</keyword>
<keyword id="KW-0802">TPR repeat</keyword>
<reference key="1">
    <citation type="submission" date="2007-03" db="EMBL/GenBank/DDBJ databases">
        <authorList>
            <consortium name="NIH - Mammalian Gene Collection (MGC) project"/>
        </authorList>
    </citation>
    <scope>NUCLEOTIDE SEQUENCE [LARGE SCALE MRNA]</scope>
    <source>
        <strain>Hereford</strain>
        <tissue>Hippocampus</tissue>
    </source>
</reference>
<comment type="similarity">
    <text evidence="1">Belongs to the TTC9 family.</text>
</comment>
<accession>A4IFF3</accession>
<gene>
    <name type="primary">TTC9C</name>
</gene>
<evidence type="ECO:0000305" key="1"/>
<name>TTC9C_BOVIN</name>